<gene>
    <name type="primary">APID73</name>
</gene>
<sequence>KNFALAILVVTFVVAVFGNTNLDPPTRPTRLRREAKPEAEPGNNRPVYIPQPRPPHPRLRREAEPEAEPGNNRPVYIPQPRPPHPRLRREAELEAEPGNNRPVYISQPRPPHPRLRREAEPEAEPGNNRPVYIPQPRPPHPRLRREAELEAEPGNNRPVYISQPRPPHPRLRREAEPEAEPGNNRPVYIPQPRPPHPRLRREAEPEAEPGNNRPVYIPQPRPPHPRLRREAEPEAEPGNNRPVYIPQPRPPHPRLRREAKPEAKPGNNRPVYIPQPRPPHPRI</sequence>
<organism>
    <name type="scientific">Apis mellifera</name>
    <name type="common">Honeybee</name>
    <dbReference type="NCBI Taxonomy" id="7460"/>
    <lineage>
        <taxon>Eukaryota</taxon>
        <taxon>Metazoa</taxon>
        <taxon>Ecdysozoa</taxon>
        <taxon>Arthropoda</taxon>
        <taxon>Hexapoda</taxon>
        <taxon>Insecta</taxon>
        <taxon>Pterygota</taxon>
        <taxon>Neoptera</taxon>
        <taxon>Endopterygota</taxon>
        <taxon>Hymenoptera</taxon>
        <taxon>Apocrita</taxon>
        <taxon>Aculeata</taxon>
        <taxon>Apoidea</taxon>
        <taxon>Anthophila</taxon>
        <taxon>Apidae</taxon>
        <taxon>Apis</taxon>
    </lineage>
</organism>
<comment type="function">
    <text evidence="3 4">Apidaecins have bactericidal activity; predominantly against Gram-negative bacteria (PubMed:2676519, PubMed:7929322). They seem to interfere with cell propagation (PubMed:2676519).</text>
</comment>
<comment type="subcellular location">
    <subcellularLocation>
        <location evidence="3 4">Secreted</location>
    </subcellularLocation>
</comment>
<comment type="mass spectrometry">
    <molecule>Apidaecin-1B</molecule>
    <text>Apidaecin-1B.</text>
</comment>
<comment type="similarity">
    <text evidence="6">Belongs to the apidaecin family.</text>
</comment>
<reference key="1">
    <citation type="journal article" date="1993" name="EMBO J.">
        <title>Apidaecin multipeptide precursor structure: a putative mechanism for amplification of the insect antibacterial response.</title>
        <authorList>
            <person name="Casteels-Josson K."/>
            <person name="Capaci T."/>
            <person name="Casteels P."/>
            <person name="Tempst P."/>
        </authorList>
    </citation>
    <scope>NUCLEOTIDE SEQUENCE [MRNA]</scope>
</reference>
<reference key="2">
    <citation type="journal article" date="1989" name="EMBO J.">
        <title>Apidaecins: antibacterial peptides from honeybees.</title>
        <authorList>
            <person name="Casteels P."/>
            <person name="Ampe C."/>
            <person name="Jacobs F."/>
            <person name="Vaeck M."/>
            <person name="Tempst P."/>
        </authorList>
    </citation>
    <scope>PROTEIN SEQUENCE OF 42-59 AND 266-283</scope>
    <scope>FUNCTION</scope>
    <scope>SUBCELLULAR LOCATION</scope>
    <source>
        <tissue evidence="5">Hemolymph</tissue>
    </source>
</reference>
<reference key="3">
    <citation type="journal article" date="1994" name="J. Biol. Chem.">
        <title>Biodiversity of apidaecin-type peptide antibiotics. Prospects of manipulating the antibacterial spectrum and combating acquired resistance.</title>
        <authorList>
            <person name="Casteels P."/>
            <person name="Romagnolo J."/>
            <person name="Castle M."/>
            <person name="Casteels-Josson K."/>
            <person name="Erdjument-Bromage H."/>
            <person name="Tempst P."/>
        </authorList>
    </citation>
    <scope>FUNCTION OF APIDAECIN-1B</scope>
    <scope>SUBCELLULAR LOCATION</scope>
    <scope>MASS SPECTROMETRY</scope>
    <source>
        <tissue evidence="5">Hemolymph</tissue>
    </source>
</reference>
<protein>
    <recommendedName>
        <fullName>Apidaecins type 73</fullName>
    </recommendedName>
    <component>
        <recommendedName>
            <fullName>Apidaecin</fullName>
        </recommendedName>
    </component>
    <component>
        <recommendedName>
            <fullName>Apidaecin-1B</fullName>
        </recommendedName>
        <alternativeName>
            <fullName>Apidaecin IB</fullName>
        </alternativeName>
    </component>
    <component>
        <recommendedName>
            <fullName>Apidaecin-1A</fullName>
        </recommendedName>
        <alternativeName>
            <fullName>Apidaecin IA</fullName>
        </alternativeName>
    </component>
</protein>
<proteinExistence type="evidence at protein level"/>
<name>APD73_APIME</name>
<dbReference type="EMBL" id="X72577">
    <property type="protein sequence ID" value="CAA51169.1"/>
    <property type="molecule type" value="mRNA"/>
</dbReference>
<dbReference type="PIR" id="S06675">
    <property type="entry name" value="S06675"/>
</dbReference>
<dbReference type="PIR" id="S35332">
    <property type="entry name" value="S35332"/>
</dbReference>
<dbReference type="PDB" id="4E81">
    <property type="method" value="X-ray"/>
    <property type="resolution" value="1.90 A"/>
    <property type="chains" value="C/D=268-279"/>
</dbReference>
<dbReference type="PDB" id="8RPY">
    <property type="method" value="EM"/>
    <property type="resolution" value="2.64 A"/>
    <property type="chains" value="y/z=239-255"/>
</dbReference>
<dbReference type="PDB" id="8RPZ">
    <property type="method" value="EM"/>
    <property type="resolution" value="2.44 A"/>
    <property type="chains" value="x/y/z=239-255"/>
</dbReference>
<dbReference type="PDB" id="8RQ0">
    <property type="method" value="EM"/>
    <property type="resolution" value="2.44 A"/>
    <property type="chains" value="x/y/z=239-255"/>
</dbReference>
<dbReference type="PDB" id="8RQ2">
    <property type="method" value="EM"/>
    <property type="resolution" value="2.44 A"/>
    <property type="chains" value="x/y/z=239-255"/>
</dbReference>
<dbReference type="PDBsum" id="4E81"/>
<dbReference type="PDBsum" id="8RPY"/>
<dbReference type="PDBsum" id="8RPZ"/>
<dbReference type="PDBsum" id="8RQ0"/>
<dbReference type="PDBsum" id="8RQ2"/>
<dbReference type="EMDB" id="EMD-19426"/>
<dbReference type="EMDB" id="EMD-19427"/>
<dbReference type="EMDB" id="EMD-19428"/>
<dbReference type="EMDB" id="EMD-19429"/>
<dbReference type="SMR" id="Q06602"/>
<dbReference type="STRING" id="7460.Q06602"/>
<dbReference type="PaxDb" id="7460-GB47546-PA"/>
<dbReference type="InParanoid" id="Q06602"/>
<dbReference type="EvolutionaryTrace" id="Q06602"/>
<dbReference type="Proteomes" id="UP000005203">
    <property type="component" value="Unplaced"/>
</dbReference>
<dbReference type="GO" id="GO:0005576">
    <property type="term" value="C:extracellular region"/>
    <property type="evidence" value="ECO:0007669"/>
    <property type="project" value="UniProtKB-SubCell"/>
</dbReference>
<dbReference type="GO" id="GO:0042742">
    <property type="term" value="P:defense response to bacterium"/>
    <property type="evidence" value="ECO:0007669"/>
    <property type="project" value="UniProtKB-KW"/>
</dbReference>
<dbReference type="GO" id="GO:0045087">
    <property type="term" value="P:innate immune response"/>
    <property type="evidence" value="ECO:0007669"/>
    <property type="project" value="UniProtKB-KW"/>
</dbReference>
<dbReference type="InterPro" id="IPR004828">
    <property type="entry name" value="Apidaecin"/>
</dbReference>
<dbReference type="Pfam" id="PF00807">
    <property type="entry name" value="Apidaecin"/>
    <property type="match status" value="9"/>
</dbReference>
<dbReference type="PRINTS" id="PR01217">
    <property type="entry name" value="PRICHEXTENSN"/>
</dbReference>
<accession>Q06602</accession>
<accession>P11525</accession>
<accession>P11526</accession>
<evidence type="ECO:0000255" key="1"/>
<evidence type="ECO:0000256" key="2">
    <source>
        <dbReference type="SAM" id="MobiDB-lite"/>
    </source>
</evidence>
<evidence type="ECO:0000269" key="3">
    <source>
    </source>
</evidence>
<evidence type="ECO:0000269" key="4">
    <source>
    </source>
</evidence>
<evidence type="ECO:0000303" key="5">
    <source>
    </source>
</evidence>
<evidence type="ECO:0000305" key="6"/>
<keyword id="KW-0002">3D-structure</keyword>
<keyword id="KW-0044">Antibiotic</keyword>
<keyword id="KW-0929">Antimicrobial</keyword>
<keyword id="KW-0165">Cleavage on pair of basic residues</keyword>
<keyword id="KW-0903">Direct protein sequencing</keyword>
<keyword id="KW-0391">Immunity</keyword>
<keyword id="KW-0399">Innate immunity</keyword>
<keyword id="KW-1185">Reference proteome</keyword>
<keyword id="KW-0677">Repeat</keyword>
<keyword id="KW-0964">Secreted</keyword>
<keyword id="KW-0732">Signal</keyword>
<feature type="signal peptide" evidence="1">
    <location>
        <begin position="1" status="less than"/>
        <end position="18"/>
    </location>
</feature>
<feature type="propeptide" id="PRO_0000004928" evidence="3">
    <location>
        <begin position="19"/>
        <end position="41"/>
    </location>
</feature>
<feature type="peptide" id="PRO_0000004929" description="Apidaecin-1B">
    <location>
        <begin position="42"/>
        <end position="59"/>
    </location>
</feature>
<feature type="propeptide" id="PRO_0000004930">
    <location>
        <begin position="62"/>
        <end position="69"/>
    </location>
</feature>
<feature type="peptide" id="PRO_0000004931" description="Apidaecin-1B">
    <location>
        <begin position="70"/>
        <end position="87"/>
    </location>
</feature>
<feature type="propeptide" id="PRO_0000004932">
    <location>
        <begin position="90"/>
        <end position="97"/>
    </location>
</feature>
<feature type="peptide" id="PRO_0000004933" description="Apidaecin">
    <location>
        <begin position="98"/>
        <end position="115"/>
    </location>
</feature>
<feature type="propeptide" id="PRO_0000004934">
    <location>
        <begin position="118"/>
        <end position="125"/>
    </location>
</feature>
<feature type="peptide" id="PRO_0000004935" description="Apidaecin-1B">
    <location>
        <begin position="126"/>
        <end position="143"/>
    </location>
</feature>
<feature type="propeptide" id="PRO_0000004936">
    <location>
        <begin position="146"/>
        <end position="153"/>
    </location>
</feature>
<feature type="peptide" id="PRO_0000004937" description="Apidaecin">
    <location>
        <begin position="154"/>
        <end position="171"/>
    </location>
</feature>
<feature type="propeptide" id="PRO_0000004938">
    <location>
        <begin position="174"/>
        <end position="181"/>
    </location>
</feature>
<feature type="peptide" id="PRO_0000004939" description="Apidaecin-1B">
    <location>
        <begin position="182"/>
        <end position="199"/>
    </location>
</feature>
<feature type="propeptide" id="PRO_0000004940">
    <location>
        <begin position="202"/>
        <end position="209"/>
    </location>
</feature>
<feature type="peptide" id="PRO_0000004941" description="Apidaecin-1B">
    <location>
        <begin position="210"/>
        <end position="227"/>
    </location>
</feature>
<feature type="propeptide" id="PRO_0000004942">
    <location>
        <begin position="230"/>
        <end position="237"/>
    </location>
</feature>
<feature type="peptide" id="PRO_0000004943" description="Apidaecin-1B">
    <location>
        <begin position="238"/>
        <end position="255"/>
    </location>
</feature>
<feature type="propeptide" id="PRO_0000004944" evidence="3">
    <location>
        <begin position="258"/>
        <end position="265"/>
    </location>
</feature>
<feature type="peptide" id="PRO_0000004945" description="Apidaecin-1A">
    <location>
        <begin position="266"/>
        <end position="283"/>
    </location>
</feature>
<feature type="region of interest" description="Disordered" evidence="2">
    <location>
        <begin position="19"/>
        <end position="283"/>
    </location>
</feature>
<feature type="compositionally biased region" description="Pro residues" evidence="2">
    <location>
        <begin position="273"/>
        <end position="283"/>
    </location>
</feature>
<feature type="non-terminal residue">
    <location>
        <position position="1"/>
    </location>
</feature>